<comment type="function">
    <text evidence="1">Catalyzes the NADPH-dependent reduction of N-acetyl-5-glutamyl phosphate to yield N-acetyl-L-glutamate 5-semialdehyde.</text>
</comment>
<comment type="catalytic activity">
    <reaction evidence="1">
        <text>N-acetyl-L-glutamate 5-semialdehyde + phosphate + NADP(+) = N-acetyl-L-glutamyl 5-phosphate + NADPH + H(+)</text>
        <dbReference type="Rhea" id="RHEA:21588"/>
        <dbReference type="ChEBI" id="CHEBI:15378"/>
        <dbReference type="ChEBI" id="CHEBI:29123"/>
        <dbReference type="ChEBI" id="CHEBI:43474"/>
        <dbReference type="ChEBI" id="CHEBI:57783"/>
        <dbReference type="ChEBI" id="CHEBI:57936"/>
        <dbReference type="ChEBI" id="CHEBI:58349"/>
        <dbReference type="EC" id="1.2.1.38"/>
    </reaction>
</comment>
<comment type="pathway">
    <text evidence="1">Amino-acid biosynthesis; L-arginine biosynthesis; N(2)-acetyl-L-ornithine from L-glutamate: step 3/4.</text>
</comment>
<comment type="subcellular location">
    <subcellularLocation>
        <location evidence="1">Cytoplasm</location>
    </subcellularLocation>
</comment>
<comment type="similarity">
    <text evidence="1">Belongs to the NAGSA dehydrogenase family. Type 1 subfamily.</text>
</comment>
<accession>A2C239</accession>
<keyword id="KW-0028">Amino-acid biosynthesis</keyword>
<keyword id="KW-0055">Arginine biosynthesis</keyword>
<keyword id="KW-0963">Cytoplasm</keyword>
<keyword id="KW-0521">NADP</keyword>
<keyword id="KW-0560">Oxidoreductase</keyword>
<protein>
    <recommendedName>
        <fullName evidence="1">N-acetyl-gamma-glutamyl-phosphate reductase</fullName>
        <shortName evidence="1">AGPR</shortName>
        <ecNumber evidence="1">1.2.1.38</ecNumber>
    </recommendedName>
    <alternativeName>
        <fullName evidence="1">N-acetyl-glutamate semialdehyde dehydrogenase</fullName>
        <shortName evidence="1">NAGSA dehydrogenase</shortName>
    </alternativeName>
</protein>
<name>ARGC_PROM1</name>
<organism>
    <name type="scientific">Prochlorococcus marinus (strain NATL1A)</name>
    <dbReference type="NCBI Taxonomy" id="167555"/>
    <lineage>
        <taxon>Bacteria</taxon>
        <taxon>Bacillati</taxon>
        <taxon>Cyanobacteriota</taxon>
        <taxon>Cyanophyceae</taxon>
        <taxon>Synechococcales</taxon>
        <taxon>Prochlorococcaceae</taxon>
        <taxon>Prochlorococcus</taxon>
    </lineage>
</organism>
<dbReference type="EC" id="1.2.1.38" evidence="1"/>
<dbReference type="EMBL" id="CP000553">
    <property type="protein sequence ID" value="ABM75549.1"/>
    <property type="molecule type" value="Genomic_DNA"/>
</dbReference>
<dbReference type="RefSeq" id="WP_011823675.1">
    <property type="nucleotide sequence ID" value="NC_008819.1"/>
</dbReference>
<dbReference type="SMR" id="A2C239"/>
<dbReference type="KEGG" id="pme:NATL1_09911"/>
<dbReference type="eggNOG" id="COG0002">
    <property type="taxonomic scope" value="Bacteria"/>
</dbReference>
<dbReference type="HOGENOM" id="CLU_006384_0_1_3"/>
<dbReference type="UniPathway" id="UPA00068">
    <property type="reaction ID" value="UER00108"/>
</dbReference>
<dbReference type="Proteomes" id="UP000002592">
    <property type="component" value="Chromosome"/>
</dbReference>
<dbReference type="GO" id="GO:0005737">
    <property type="term" value="C:cytoplasm"/>
    <property type="evidence" value="ECO:0007669"/>
    <property type="project" value="UniProtKB-SubCell"/>
</dbReference>
<dbReference type="GO" id="GO:0003942">
    <property type="term" value="F:N-acetyl-gamma-glutamyl-phosphate reductase activity"/>
    <property type="evidence" value="ECO:0007669"/>
    <property type="project" value="UniProtKB-UniRule"/>
</dbReference>
<dbReference type="GO" id="GO:0051287">
    <property type="term" value="F:NAD binding"/>
    <property type="evidence" value="ECO:0007669"/>
    <property type="project" value="InterPro"/>
</dbReference>
<dbReference type="GO" id="GO:0070401">
    <property type="term" value="F:NADP+ binding"/>
    <property type="evidence" value="ECO:0007669"/>
    <property type="project" value="InterPro"/>
</dbReference>
<dbReference type="GO" id="GO:0006526">
    <property type="term" value="P:L-arginine biosynthetic process"/>
    <property type="evidence" value="ECO:0007669"/>
    <property type="project" value="UniProtKB-UniRule"/>
</dbReference>
<dbReference type="CDD" id="cd23934">
    <property type="entry name" value="AGPR_1_C"/>
    <property type="match status" value="1"/>
</dbReference>
<dbReference type="CDD" id="cd17895">
    <property type="entry name" value="AGPR_1_N"/>
    <property type="match status" value="1"/>
</dbReference>
<dbReference type="FunFam" id="3.30.360.10:FF:000014">
    <property type="entry name" value="N-acetyl-gamma-glutamyl-phosphate reductase"/>
    <property type="match status" value="1"/>
</dbReference>
<dbReference type="Gene3D" id="3.30.360.10">
    <property type="entry name" value="Dihydrodipicolinate Reductase, domain 2"/>
    <property type="match status" value="1"/>
</dbReference>
<dbReference type="Gene3D" id="3.40.50.720">
    <property type="entry name" value="NAD(P)-binding Rossmann-like Domain"/>
    <property type="match status" value="1"/>
</dbReference>
<dbReference type="HAMAP" id="MF_00150">
    <property type="entry name" value="ArgC_type1"/>
    <property type="match status" value="1"/>
</dbReference>
<dbReference type="InterPro" id="IPR023013">
    <property type="entry name" value="AGPR_AS"/>
</dbReference>
<dbReference type="InterPro" id="IPR000706">
    <property type="entry name" value="AGPR_type-1"/>
</dbReference>
<dbReference type="InterPro" id="IPR036291">
    <property type="entry name" value="NAD(P)-bd_dom_sf"/>
</dbReference>
<dbReference type="InterPro" id="IPR050085">
    <property type="entry name" value="NAGSA_dehydrogenase"/>
</dbReference>
<dbReference type="InterPro" id="IPR000534">
    <property type="entry name" value="Semialdehyde_DH_NAD-bd"/>
</dbReference>
<dbReference type="NCBIfam" id="TIGR01850">
    <property type="entry name" value="argC"/>
    <property type="match status" value="1"/>
</dbReference>
<dbReference type="PANTHER" id="PTHR32338:SF10">
    <property type="entry name" value="N-ACETYL-GAMMA-GLUTAMYL-PHOSPHATE REDUCTASE, CHLOROPLASTIC-RELATED"/>
    <property type="match status" value="1"/>
</dbReference>
<dbReference type="PANTHER" id="PTHR32338">
    <property type="entry name" value="N-ACETYL-GAMMA-GLUTAMYL-PHOSPHATE REDUCTASE, CHLOROPLASTIC-RELATED-RELATED"/>
    <property type="match status" value="1"/>
</dbReference>
<dbReference type="Pfam" id="PF01118">
    <property type="entry name" value="Semialdhyde_dh"/>
    <property type="match status" value="1"/>
</dbReference>
<dbReference type="Pfam" id="PF22698">
    <property type="entry name" value="Semialdhyde_dhC_1"/>
    <property type="match status" value="1"/>
</dbReference>
<dbReference type="SMART" id="SM00859">
    <property type="entry name" value="Semialdhyde_dh"/>
    <property type="match status" value="1"/>
</dbReference>
<dbReference type="SUPFAM" id="SSF55347">
    <property type="entry name" value="Glyceraldehyde-3-phosphate dehydrogenase-like, C-terminal domain"/>
    <property type="match status" value="1"/>
</dbReference>
<dbReference type="SUPFAM" id="SSF51735">
    <property type="entry name" value="NAD(P)-binding Rossmann-fold domains"/>
    <property type="match status" value="1"/>
</dbReference>
<dbReference type="PROSITE" id="PS01224">
    <property type="entry name" value="ARGC"/>
    <property type="match status" value="1"/>
</dbReference>
<sequence>MAKSTSKTGRIAIIGASGYGGLQLVKLINEHPNFEISTLNGERSVGKNWNEINPFMKILQDKKITKSNIDEIALDSDYAILSLPNGLSSQLTPLLLKKGVKVLDLSADYRFKSLDKWKEVYTKEAAKYKRYDYELCEEAIYGFSEEFSSEISKSRLIACPGCYPTASLSLLIPFLKQGLIESEGIIVDAKSGTSGGGRNPNEQLLLSECSESISPYGVIGHRHTAEIERIASHFAGHEVNLQFTPHLVPMVRGILSTVYARLRDPGLTAEDCKIVIEAFYKDQPFIDILPVGIYPATKWVKNTNKVMISVEVDKRNGRIVLMSVIDNLLKGQAGQAVQNLNIMHGLESDIGLPKITFYP</sequence>
<evidence type="ECO:0000255" key="1">
    <source>
        <dbReference type="HAMAP-Rule" id="MF_00150"/>
    </source>
</evidence>
<gene>
    <name evidence="1" type="primary">argC</name>
    <name type="ordered locus">NATL1_09911</name>
</gene>
<reference key="1">
    <citation type="journal article" date="2007" name="PLoS Genet.">
        <title>Patterns and implications of gene gain and loss in the evolution of Prochlorococcus.</title>
        <authorList>
            <person name="Kettler G.C."/>
            <person name="Martiny A.C."/>
            <person name="Huang K."/>
            <person name="Zucker J."/>
            <person name="Coleman M.L."/>
            <person name="Rodrigue S."/>
            <person name="Chen F."/>
            <person name="Lapidus A."/>
            <person name="Ferriera S."/>
            <person name="Johnson J."/>
            <person name="Steglich C."/>
            <person name="Church G.M."/>
            <person name="Richardson P."/>
            <person name="Chisholm S.W."/>
        </authorList>
    </citation>
    <scope>NUCLEOTIDE SEQUENCE [LARGE SCALE GENOMIC DNA]</scope>
    <source>
        <strain>NATL1A</strain>
    </source>
</reference>
<feature type="chain" id="PRO_1000011032" description="N-acetyl-gamma-glutamyl-phosphate reductase">
    <location>
        <begin position="1"/>
        <end position="359"/>
    </location>
</feature>
<feature type="active site" evidence="1">
    <location>
        <position position="162"/>
    </location>
</feature>
<proteinExistence type="inferred from homology"/>